<organism>
    <name type="scientific">Bacillus thuringiensis subsp. konkukian (strain 97-27)</name>
    <dbReference type="NCBI Taxonomy" id="281309"/>
    <lineage>
        <taxon>Bacteria</taxon>
        <taxon>Bacillati</taxon>
        <taxon>Bacillota</taxon>
        <taxon>Bacilli</taxon>
        <taxon>Bacillales</taxon>
        <taxon>Bacillaceae</taxon>
        <taxon>Bacillus</taxon>
        <taxon>Bacillus cereus group</taxon>
    </lineage>
</organism>
<accession>Q6HAN7</accession>
<name>UNG_BACHK</name>
<evidence type="ECO:0000255" key="1">
    <source>
        <dbReference type="HAMAP-Rule" id="MF_00148"/>
    </source>
</evidence>
<proteinExistence type="inferred from homology"/>
<dbReference type="EC" id="3.2.2.27" evidence="1"/>
<dbReference type="EMBL" id="AE017355">
    <property type="protein sequence ID" value="AAT62643.1"/>
    <property type="molecule type" value="Genomic_DNA"/>
</dbReference>
<dbReference type="RefSeq" id="WP_011181937.1">
    <property type="nucleotide sequence ID" value="NC_005957.1"/>
</dbReference>
<dbReference type="RefSeq" id="YP_039389.1">
    <property type="nucleotide sequence ID" value="NC_005957.1"/>
</dbReference>
<dbReference type="SMR" id="Q6HAN7"/>
<dbReference type="KEGG" id="btk:BT9727_5079"/>
<dbReference type="PATRIC" id="fig|281309.8.peg.5404"/>
<dbReference type="HOGENOM" id="CLU_032162_3_1_9"/>
<dbReference type="Proteomes" id="UP000001301">
    <property type="component" value="Chromosome"/>
</dbReference>
<dbReference type="GO" id="GO:0005737">
    <property type="term" value="C:cytoplasm"/>
    <property type="evidence" value="ECO:0007669"/>
    <property type="project" value="UniProtKB-SubCell"/>
</dbReference>
<dbReference type="GO" id="GO:0004844">
    <property type="term" value="F:uracil DNA N-glycosylase activity"/>
    <property type="evidence" value="ECO:0007669"/>
    <property type="project" value="UniProtKB-UniRule"/>
</dbReference>
<dbReference type="GO" id="GO:0097510">
    <property type="term" value="P:base-excision repair, AP site formation via deaminated base removal"/>
    <property type="evidence" value="ECO:0007669"/>
    <property type="project" value="TreeGrafter"/>
</dbReference>
<dbReference type="CDD" id="cd10027">
    <property type="entry name" value="UDG-F1-like"/>
    <property type="match status" value="1"/>
</dbReference>
<dbReference type="FunFam" id="3.40.470.10:FF:000001">
    <property type="entry name" value="Uracil-DNA glycosylase"/>
    <property type="match status" value="1"/>
</dbReference>
<dbReference type="Gene3D" id="3.40.470.10">
    <property type="entry name" value="Uracil-DNA glycosylase-like domain"/>
    <property type="match status" value="1"/>
</dbReference>
<dbReference type="HAMAP" id="MF_00148">
    <property type="entry name" value="UDG"/>
    <property type="match status" value="1"/>
</dbReference>
<dbReference type="InterPro" id="IPR002043">
    <property type="entry name" value="UDG_fam1"/>
</dbReference>
<dbReference type="InterPro" id="IPR018085">
    <property type="entry name" value="Ura-DNA_Glyclase_AS"/>
</dbReference>
<dbReference type="InterPro" id="IPR005122">
    <property type="entry name" value="Uracil-DNA_glycosylase-like"/>
</dbReference>
<dbReference type="InterPro" id="IPR036895">
    <property type="entry name" value="Uracil-DNA_glycosylase-like_sf"/>
</dbReference>
<dbReference type="NCBIfam" id="NF003588">
    <property type="entry name" value="PRK05254.1-1"/>
    <property type="match status" value="1"/>
</dbReference>
<dbReference type="NCBIfam" id="NF003589">
    <property type="entry name" value="PRK05254.1-2"/>
    <property type="match status" value="1"/>
</dbReference>
<dbReference type="NCBIfam" id="NF003591">
    <property type="entry name" value="PRK05254.1-4"/>
    <property type="match status" value="1"/>
</dbReference>
<dbReference type="NCBIfam" id="NF003592">
    <property type="entry name" value="PRK05254.1-5"/>
    <property type="match status" value="1"/>
</dbReference>
<dbReference type="NCBIfam" id="TIGR00628">
    <property type="entry name" value="ung"/>
    <property type="match status" value="1"/>
</dbReference>
<dbReference type="PANTHER" id="PTHR11264">
    <property type="entry name" value="URACIL-DNA GLYCOSYLASE"/>
    <property type="match status" value="1"/>
</dbReference>
<dbReference type="PANTHER" id="PTHR11264:SF0">
    <property type="entry name" value="URACIL-DNA GLYCOSYLASE"/>
    <property type="match status" value="1"/>
</dbReference>
<dbReference type="Pfam" id="PF03167">
    <property type="entry name" value="UDG"/>
    <property type="match status" value="1"/>
</dbReference>
<dbReference type="SMART" id="SM00986">
    <property type="entry name" value="UDG"/>
    <property type="match status" value="1"/>
</dbReference>
<dbReference type="SMART" id="SM00987">
    <property type="entry name" value="UreE_C"/>
    <property type="match status" value="1"/>
</dbReference>
<dbReference type="SUPFAM" id="SSF52141">
    <property type="entry name" value="Uracil-DNA glycosylase-like"/>
    <property type="match status" value="1"/>
</dbReference>
<dbReference type="PROSITE" id="PS00130">
    <property type="entry name" value="U_DNA_GLYCOSYLASE"/>
    <property type="match status" value="1"/>
</dbReference>
<reference key="1">
    <citation type="journal article" date="2006" name="J. Bacteriol.">
        <title>Pathogenomic sequence analysis of Bacillus cereus and Bacillus thuringiensis isolates closely related to Bacillus anthracis.</title>
        <authorList>
            <person name="Han C.S."/>
            <person name="Xie G."/>
            <person name="Challacombe J.F."/>
            <person name="Altherr M.R."/>
            <person name="Bhotika S.S."/>
            <person name="Bruce D."/>
            <person name="Campbell C.S."/>
            <person name="Campbell M.L."/>
            <person name="Chen J."/>
            <person name="Chertkov O."/>
            <person name="Cleland C."/>
            <person name="Dimitrijevic M."/>
            <person name="Doggett N.A."/>
            <person name="Fawcett J.J."/>
            <person name="Glavina T."/>
            <person name="Goodwin L.A."/>
            <person name="Hill K.K."/>
            <person name="Hitchcock P."/>
            <person name="Jackson P.J."/>
            <person name="Keim P."/>
            <person name="Kewalramani A.R."/>
            <person name="Longmire J."/>
            <person name="Lucas S."/>
            <person name="Malfatti S."/>
            <person name="McMurry K."/>
            <person name="Meincke L.J."/>
            <person name="Misra M."/>
            <person name="Moseman B.L."/>
            <person name="Mundt M."/>
            <person name="Munk A.C."/>
            <person name="Okinaka R.T."/>
            <person name="Parson-Quintana B."/>
            <person name="Reilly L.P."/>
            <person name="Richardson P."/>
            <person name="Robinson D.L."/>
            <person name="Rubin E."/>
            <person name="Saunders E."/>
            <person name="Tapia R."/>
            <person name="Tesmer J.G."/>
            <person name="Thayer N."/>
            <person name="Thompson L.S."/>
            <person name="Tice H."/>
            <person name="Ticknor L.O."/>
            <person name="Wills P.L."/>
            <person name="Brettin T.S."/>
            <person name="Gilna P."/>
        </authorList>
    </citation>
    <scope>NUCLEOTIDE SEQUENCE [LARGE SCALE GENOMIC DNA]</scope>
    <source>
        <strain>97-27</strain>
    </source>
</reference>
<gene>
    <name evidence="1" type="primary">ung</name>
    <name type="ordered locus">BT9727_5079</name>
</gene>
<keyword id="KW-0963">Cytoplasm</keyword>
<keyword id="KW-0227">DNA damage</keyword>
<keyword id="KW-0234">DNA repair</keyword>
<keyword id="KW-0378">Hydrolase</keyword>
<comment type="function">
    <text evidence="1">Excises uracil residues from the DNA which can arise as a result of misincorporation of dUMP residues by DNA polymerase or due to deamination of cytosine.</text>
</comment>
<comment type="catalytic activity">
    <reaction evidence="1">
        <text>Hydrolyzes single-stranded DNA or mismatched double-stranded DNA and polynucleotides, releasing free uracil.</text>
        <dbReference type="EC" id="3.2.2.27"/>
    </reaction>
</comment>
<comment type="subcellular location">
    <subcellularLocation>
        <location evidence="1">Cytoplasm</location>
    </subcellularLocation>
</comment>
<comment type="similarity">
    <text evidence="1">Belongs to the uracil-DNA glycosylase (UDG) superfamily. UNG family.</text>
</comment>
<sequence>MKHVLKNDWGLLLAPEFEKEYYRELDVFLKEEYSIHVVYPKIEDIFNALEYTSYENTKVVILGQDPYHGPNQAHGLSFSVQPGVKTPPSLLNMYKELRDEYGYDIPNNGYLVKWAEQGVLLLNTVLTVRQGEANSHKGKGWEHFTDRVIELLNEREKPVIFILWGRHAQAKKKLITNSNHHIIESVHPSPLSARRGFFGSKPYSKVNTILANMGEREIDWEIPNL</sequence>
<feature type="chain" id="PRO_0000176064" description="Uracil-DNA glycosylase">
    <location>
        <begin position="1"/>
        <end position="225"/>
    </location>
</feature>
<feature type="active site" description="Proton acceptor" evidence="1">
    <location>
        <position position="65"/>
    </location>
</feature>
<protein>
    <recommendedName>
        <fullName evidence="1">Uracil-DNA glycosylase</fullName>
        <shortName evidence="1">UDG</shortName>
        <ecNumber evidence="1">3.2.2.27</ecNumber>
    </recommendedName>
</protein>